<accession>Q64525</accession>
<proteinExistence type="evidence at protein level"/>
<organism>
    <name type="scientific">Mus musculus</name>
    <name type="common">Mouse</name>
    <dbReference type="NCBI Taxonomy" id="10090"/>
    <lineage>
        <taxon>Eukaryota</taxon>
        <taxon>Metazoa</taxon>
        <taxon>Chordata</taxon>
        <taxon>Craniata</taxon>
        <taxon>Vertebrata</taxon>
        <taxon>Euteleostomi</taxon>
        <taxon>Mammalia</taxon>
        <taxon>Eutheria</taxon>
        <taxon>Euarchontoglires</taxon>
        <taxon>Glires</taxon>
        <taxon>Rodentia</taxon>
        <taxon>Myomorpha</taxon>
        <taxon>Muroidea</taxon>
        <taxon>Muridae</taxon>
        <taxon>Murinae</taxon>
        <taxon>Mus</taxon>
        <taxon>Mus</taxon>
    </lineage>
</organism>
<keyword id="KW-0007">Acetylation</keyword>
<keyword id="KW-0013">ADP-ribosylation</keyword>
<keyword id="KW-0158">Chromosome</keyword>
<keyword id="KW-0238">DNA-binding</keyword>
<keyword id="KW-0325">Glycoprotein</keyword>
<keyword id="KW-0379">Hydroxylation</keyword>
<keyword id="KW-1017">Isopeptide bond</keyword>
<keyword id="KW-0488">Methylation</keyword>
<keyword id="KW-0544">Nucleosome core</keyword>
<keyword id="KW-0539">Nucleus</keyword>
<keyword id="KW-0597">Phosphoprotein</keyword>
<keyword id="KW-1185">Reference proteome</keyword>
<keyword id="KW-0832">Ubl conjugation</keyword>
<sequence length="126" mass="13920">MPDPAKSAPAPKKGSKKAVTKVQKKDGKKRKRSRKESYSVYVYKVLKQVHPDTGISSKAMGIMNSFVNDIFERIAGEASRLAHYNKRSTITSREIQTAVRLLLPGELAKHAVSEGTKAVTKYTSSK</sequence>
<evidence type="ECO:0000250" key="1">
    <source>
        <dbReference type="UniProtKB" id="P33778"/>
    </source>
</evidence>
<evidence type="ECO:0000250" key="2">
    <source>
        <dbReference type="UniProtKB" id="P58876"/>
    </source>
</evidence>
<evidence type="ECO:0000250" key="3">
    <source>
        <dbReference type="UniProtKB" id="P62807"/>
    </source>
</evidence>
<evidence type="ECO:0000250" key="4">
    <source>
        <dbReference type="UniProtKB" id="P62808"/>
    </source>
</evidence>
<evidence type="ECO:0000250" key="5">
    <source>
        <dbReference type="UniProtKB" id="Q00729"/>
    </source>
</evidence>
<evidence type="ECO:0000250" key="6">
    <source>
        <dbReference type="UniProtKB" id="Q5QNW6"/>
    </source>
</evidence>
<evidence type="ECO:0000250" key="7">
    <source>
        <dbReference type="UniProtKB" id="Q96A08"/>
    </source>
</evidence>
<evidence type="ECO:0000256" key="8">
    <source>
        <dbReference type="SAM" id="MobiDB-lite"/>
    </source>
</evidence>
<evidence type="ECO:0000269" key="9">
    <source>
    </source>
</evidence>
<evidence type="ECO:0000269" key="10">
    <source>
    </source>
</evidence>
<evidence type="ECO:0000269" key="11">
    <source>
    </source>
</evidence>
<evidence type="ECO:0000269" key="12">
    <source>
    </source>
</evidence>
<evidence type="ECO:0000269" key="13">
    <source>
    </source>
</evidence>
<evidence type="ECO:0000269" key="14">
    <source>
    </source>
</evidence>
<evidence type="ECO:0000269" key="15">
    <source>
    </source>
</evidence>
<evidence type="ECO:0000269" key="16">
    <source>
    </source>
</evidence>
<evidence type="ECO:0000269" key="17">
    <source>
    </source>
</evidence>
<evidence type="ECO:0000305" key="18"/>
<evidence type="ECO:0000312" key="19">
    <source>
        <dbReference type="MGI" id="MGI:2448413"/>
    </source>
</evidence>
<evidence type="ECO:0007744" key="20">
    <source>
    </source>
</evidence>
<protein>
    <recommendedName>
        <fullName evidence="18">Histone H2B type 2-B</fullName>
    </recommendedName>
    <alternativeName>
        <fullName evidence="19">H2B-clustered histone 18</fullName>
    </alternativeName>
    <alternativeName>
        <fullName evidence="19">H2b-616</fullName>
    </alternativeName>
</protein>
<comment type="function">
    <text>Core component of nucleosome. Nucleosomes wrap and compact DNA into chromatin, limiting DNA accessibility to the cellular machineries which require DNA as a template. Histones thereby play a central role in transcription regulation, DNA repair, DNA replication and chromosomal stability. DNA accessibility is regulated via a complex set of post-translational modifications of histones, also called histone code, and nucleosome remodeling.</text>
</comment>
<comment type="subunit">
    <text>The nucleosome is a histone octamer containing two molecules each of H2A, H2B, H3 and H4 assembled in one H3-H4 heterotetramer and two H2A-H2B heterodimers. The octamer wraps approximately 147 bp of DNA.</text>
</comment>
<comment type="subcellular location">
    <subcellularLocation>
        <location>Nucleus</location>
    </subcellularLocation>
    <subcellularLocation>
        <location>Chromosome</location>
    </subcellularLocation>
</comment>
<comment type="PTM">
    <text evidence="1">Monoubiquitination at Lys-35 (H2BK34Ub) by the MSL1/MSL2 dimer is required for histone H3 'Lys-4' (H3K4me) and 'Lys-79' (H3K79me) methylation and transcription activation at specific gene loci, such as HOXA9 and MEIS1 loci. Similarly, monoubiquitination at Lys-121 (H2BK120Ub) by the RNF20/40 complex gives a specific tag for epigenetic transcriptional activation and is also prerequisite for histone H3 'Lys-4' and 'Lys-79' methylation. It also functions cooperatively with the FACT dimer to stimulate elongation by RNA polymerase II. H2BK120Ub also acts as a regulator of mRNA splicing: deubiquitination by USP49 is required for efficient cotranscriptional splicing of a large set of exons (By similarity).</text>
</comment>
<comment type="PTM">
    <text evidence="9 10 11 17">Phosphorylated on Ser-15 (H2BS14ph) by STK4/MST1 during apoptosis; which facilitates apoptotic chromatin condensation (PubMed:15197225, PubMed:16039583). Also phosphorylated on Ser-15 in response to DNA double strand breaks (DSBs), and in correlation with somatic hypermutation and immunoglobulin class-switch recombination (PubMed:15197225). Phosphorylation at Ser-37 (H2BS36ph) by AMPK in response to stress promotes transcription (PubMed:20647423, PubMed:32822587).</text>
</comment>
<comment type="PTM">
    <text evidence="3">GlcNAcylation at Ser-113 promotes monoubiquitination of Lys-121. It fluctuates in response to extracellular glucose, and associates with transcribed genes (By similarity).</text>
</comment>
<comment type="PTM">
    <text evidence="1 17">ADP-ribosylated by PARP1 or PARP2 on Ser-7 (H2BS6ADPr) in response to DNA damage (By similarity). H2BS6ADPr promotes recruitment of CHD1L (By similarity). Poly ADP-ribosylation on Glu-36 (H2BE35ADPr) by PARP1 regulates adipogenesis: it inhibits phosphorylation at Ser-37 (H2BS36ph), thereby blocking expression of pro-adipogenetic genes (PubMed:32822587).</text>
</comment>
<comment type="PTM">
    <text evidence="12">Crotonylation (Kcr) is specifically present in male germ cells and marks testis-specific genes in post-meiotic cells, including X-linked genes that escape sex chromosome inactivation in haploid cells. Crotonylation marks active promoters and enhancers and confers resistance to transcriptional repressors. It is also associated with post-meiotically activated genes on autosomes.</text>
</comment>
<comment type="PTM">
    <text evidence="15">Hydroxybutyrylation of histones is induced by starvation.</text>
</comment>
<comment type="PTM">
    <text evidence="1">Lactylated in macrophages by EP300/P300 by using lactoyl-CoA directly derived from endogenous or exogenous lactate, leading to stimulates gene transcription.</text>
</comment>
<comment type="similarity">
    <text evidence="18">Belongs to the histone H2B family.</text>
</comment>
<feature type="initiator methionine" description="Removed" evidence="20">
    <location>
        <position position="1"/>
    </location>
</feature>
<feature type="chain" id="PRO_0000244835" description="Histone H2B type 2-B">
    <location>
        <begin position="2"/>
        <end position="126"/>
    </location>
</feature>
<feature type="region of interest" description="Disordered" evidence="8">
    <location>
        <begin position="1"/>
        <end position="36"/>
    </location>
</feature>
<feature type="compositionally biased region" description="Low complexity" evidence="8">
    <location>
        <begin position="1"/>
        <end position="12"/>
    </location>
</feature>
<feature type="modified residue" description="N-acetylproline" evidence="20">
    <location>
        <position position="2"/>
    </location>
</feature>
<feature type="modified residue" description="N6-(2-hydroxyisobutyryl)lysine; alternate" evidence="14">
    <location>
        <position position="6"/>
    </location>
</feature>
<feature type="modified residue" description="N6-(beta-hydroxybutyryl)lysine; alternate" evidence="15">
    <location>
        <position position="6"/>
    </location>
</feature>
<feature type="modified residue" description="N6-acetyllysine; alternate" evidence="20">
    <location>
        <position position="6"/>
    </location>
</feature>
<feature type="modified residue" description="N6-butyryllysine; alternate" evidence="1">
    <location>
        <position position="6"/>
    </location>
</feature>
<feature type="modified residue" description="N6-crotonyllysine; alternate" evidence="12">
    <location>
        <position position="6"/>
    </location>
</feature>
<feature type="modified residue" description="N6-lactoyllysine; alternate" evidence="16">
    <location>
        <position position="6"/>
    </location>
</feature>
<feature type="modified residue" description="ADP-ribosylserine" evidence="1">
    <location>
        <position position="7"/>
    </location>
</feature>
<feature type="modified residue" description="N6-(beta-hydroxybutyryl)lysine; alternate" evidence="15">
    <location>
        <position position="12"/>
    </location>
</feature>
<feature type="modified residue" description="N6-acetyllysine; alternate" evidence="20">
    <location>
        <position position="12"/>
    </location>
</feature>
<feature type="modified residue" description="N6-crotonyllysine; alternate" evidence="12">
    <location>
        <position position="12"/>
    </location>
</feature>
<feature type="modified residue" description="N6-lactoyllysine; alternate" evidence="16">
    <location>
        <position position="12"/>
    </location>
</feature>
<feature type="modified residue" description="N6-(2-hydroxyisobutyryl)lysine; alternate" evidence="14">
    <location>
        <position position="13"/>
    </location>
</feature>
<feature type="modified residue" description="N6-acetyllysine; alternate" evidence="1">
    <location>
        <position position="13"/>
    </location>
</feature>
<feature type="modified residue" description="N6-crotonyllysine; alternate" evidence="12">
    <location>
        <position position="13"/>
    </location>
</feature>
<feature type="modified residue" description="Phosphoserine; by STK4/MST1" evidence="9 10">
    <location>
        <position position="15"/>
    </location>
</feature>
<feature type="modified residue" description="N6-acetyllysine; alternate" evidence="1">
    <location>
        <position position="16"/>
    </location>
</feature>
<feature type="modified residue" description="N6-crotonyllysine; alternate" evidence="12">
    <location>
        <position position="16"/>
    </location>
</feature>
<feature type="modified residue" description="N6-lactoyllysine; alternate" evidence="16">
    <location>
        <position position="16"/>
    </location>
</feature>
<feature type="modified residue" description="N6-acetyllysine; alternate" evidence="20">
    <location>
        <position position="17"/>
    </location>
</feature>
<feature type="modified residue" description="N6-crotonyllysine; alternate" evidence="12">
    <location>
        <position position="17"/>
    </location>
</feature>
<feature type="modified residue" description="N6-glutaryllysine; alternate" evidence="1">
    <location>
        <position position="17"/>
    </location>
</feature>
<feature type="modified residue" description="N6-lactoyllysine; alternate" evidence="16">
    <location>
        <position position="17"/>
    </location>
</feature>
<feature type="modified residue" description="N6-(2-hydroxyisobutyryl)lysine; alternate" evidence="14">
    <location>
        <position position="21"/>
    </location>
</feature>
<feature type="modified residue" description="N6-(beta-hydroxybutyryl)lysine; alternate" evidence="15">
    <location>
        <position position="21"/>
    </location>
</feature>
<feature type="modified residue" description="N6-acetyllysine; alternate" evidence="20">
    <location>
        <position position="21"/>
    </location>
</feature>
<feature type="modified residue" description="N6-butyryllysine; alternate" evidence="1">
    <location>
        <position position="21"/>
    </location>
</feature>
<feature type="modified residue" description="N6-crotonyllysine; alternate" evidence="12">
    <location>
        <position position="21"/>
    </location>
</feature>
<feature type="modified residue" description="N6-lactoyllysine; alternate" evidence="16">
    <location>
        <position position="21"/>
    </location>
</feature>
<feature type="modified residue" description="N6-(2-hydroxyisobutyryl)lysine; alternate" evidence="14">
    <location>
        <position position="24"/>
    </location>
</feature>
<feature type="modified residue" description="N6-acetyllysine; alternate" evidence="1">
    <location>
        <position position="24"/>
    </location>
</feature>
<feature type="modified residue" description="N6-crotonyllysine; alternate" evidence="12">
    <location>
        <position position="24"/>
    </location>
</feature>
<feature type="modified residue" description="N6-lactoyllysine; alternate" evidence="1">
    <location>
        <position position="24"/>
    </location>
</feature>
<feature type="modified residue" description="N6-(2-hydroxyisobutyryl)lysine" evidence="14">
    <location>
        <position position="25"/>
    </location>
</feature>
<feature type="modified residue" description="N6-(2-hydroxyisobutyryl)lysine; alternate" evidence="14">
    <location>
        <position position="35"/>
    </location>
</feature>
<feature type="modified residue" description="N6-(beta-hydroxybutyryl)lysine; alternate" evidence="15">
    <location>
        <position position="35"/>
    </location>
</feature>
<feature type="modified residue" description="N6-crotonyllysine; alternate" evidence="12">
    <location>
        <position position="35"/>
    </location>
</feature>
<feature type="modified residue" description="N6-glutaryllysine; alternate" evidence="1">
    <location>
        <position position="35"/>
    </location>
</feature>
<feature type="modified residue" description="N6-succinyllysine; alternate" evidence="1">
    <location>
        <position position="35"/>
    </location>
</feature>
<feature type="modified residue" description="PolyADP-ribosyl glutamic acid" evidence="17">
    <location>
        <position position="36"/>
    </location>
</feature>
<feature type="modified residue" description="Phosphoserine; by AMPK" evidence="11 17">
    <location>
        <position position="37"/>
    </location>
</feature>
<feature type="modified residue" description="N6-(2-hydroxyisobutyryl)lysine; alternate" evidence="14">
    <location>
        <position position="44"/>
    </location>
</feature>
<feature type="modified residue" description="N6-glutaryllysine; alternate" evidence="1">
    <location>
        <position position="44"/>
    </location>
</feature>
<feature type="modified residue" description="N6-lactoyllysine; alternate" evidence="1">
    <location>
        <position position="44"/>
    </location>
</feature>
<feature type="modified residue" description="N6-(2-hydroxyisobutyryl)lysine; alternate" evidence="14">
    <location>
        <position position="47"/>
    </location>
</feature>
<feature type="modified residue" description="N6-glutaryllysine; alternate" evidence="1">
    <location>
        <position position="47"/>
    </location>
</feature>
<feature type="modified residue" description="N6-methyllysine; alternate" evidence="3">
    <location>
        <position position="47"/>
    </location>
</feature>
<feature type="modified residue" description="N6,N6-dimethyllysine; alternate" evidence="3">
    <location>
        <position position="58"/>
    </location>
</feature>
<feature type="modified residue" description="N6-(2-hydroxyisobutyryl)lysine; alternate" evidence="14">
    <location>
        <position position="58"/>
    </location>
</feature>
<feature type="modified residue" description="Dimethylated arginine" evidence="7">
    <location>
        <position position="80"/>
    </location>
</feature>
<feature type="modified residue" description="N6,N6,N6-trimethyllysine; alternate" evidence="7">
    <location>
        <position position="86"/>
    </location>
</feature>
<feature type="modified residue" description="N6-(2-hydroxyisobutyryl)lysine; alternate" evidence="14">
    <location>
        <position position="86"/>
    </location>
</feature>
<feature type="modified residue" description="N6-acetyllysine; alternate" evidence="7">
    <location>
        <position position="86"/>
    </location>
</feature>
<feature type="modified residue" description="N6-lactoyllysine; alternate" evidence="16">
    <location>
        <position position="86"/>
    </location>
</feature>
<feature type="modified residue" description="Omega-N-methylarginine" evidence="7">
    <location>
        <position position="87"/>
    </location>
</feature>
<feature type="modified residue" description="Omega-N-methylarginine" evidence="7">
    <location>
        <position position="93"/>
    </location>
</feature>
<feature type="modified residue" description="N6-(2-hydroxyisobutyryl)lysine; alternate" evidence="14">
    <location>
        <position position="109"/>
    </location>
</feature>
<feature type="modified residue" description="N6-(beta-hydroxybutyryl)lysine; alternate" evidence="15">
    <location>
        <position position="109"/>
    </location>
</feature>
<feature type="modified residue" description="N6-glutaryllysine; alternate" evidence="1">
    <location>
        <position position="109"/>
    </location>
</feature>
<feature type="modified residue" description="N6-lactoyllysine; alternate" evidence="16">
    <location>
        <position position="109"/>
    </location>
</feature>
<feature type="modified residue" description="N6-methyllysine; alternate" evidence="3">
    <location>
        <position position="109"/>
    </location>
</feature>
<feature type="modified residue" description="Phosphothreonine" evidence="5">
    <location>
        <position position="116"/>
    </location>
</feature>
<feature type="modified residue" description="N6-(2-hydroxyisobutyryl)lysine; alternate" evidence="14">
    <location>
        <position position="117"/>
    </location>
</feature>
<feature type="modified residue" description="N6-(beta-hydroxybutyryl)lysine; alternate" evidence="15">
    <location>
        <position position="117"/>
    </location>
</feature>
<feature type="modified residue" description="N6-glutaryllysine; alternate" evidence="1">
    <location>
        <position position="117"/>
    </location>
</feature>
<feature type="modified residue" description="N6-lactoyllysine; alternate" evidence="16">
    <location>
        <position position="117"/>
    </location>
</feature>
<feature type="modified residue" description="N6-methylated lysine; alternate" evidence="5">
    <location>
        <position position="117"/>
    </location>
</feature>
<feature type="modified residue" description="N6-succinyllysine; alternate" evidence="1">
    <location>
        <position position="117"/>
    </location>
</feature>
<feature type="modified residue" description="N6-(2-hydroxyisobutyryl)lysine; alternate" evidence="14">
    <location>
        <position position="121"/>
    </location>
</feature>
<feature type="modified residue" description="N6-glutaryllysine; alternate" evidence="1">
    <location>
        <position position="121"/>
    </location>
</feature>
<feature type="modified residue" description="N6-lactoyllysine; alternate" evidence="1">
    <location>
        <position position="121"/>
    </location>
</feature>
<feature type="modified residue" description="N6-succinyllysine; alternate" evidence="13">
    <location>
        <position position="121"/>
    </location>
</feature>
<feature type="glycosylation site" description="O-linked (GlcNAc) serine" evidence="3">
    <location>
        <position position="113"/>
    </location>
</feature>
<feature type="cross-link" description="Glycyl lysine isopeptide (Lys-Gly) (interchain with G-Cter in SUMO2); alternate" evidence="2">
    <location>
        <position position="6"/>
    </location>
</feature>
<feature type="cross-link" description="Glycyl lysine isopeptide (Lys-Gly) (interchain with G-Cter in SUMO2); alternate" evidence="6">
    <location>
        <position position="21"/>
    </location>
</feature>
<feature type="cross-link" description="Glycyl lysine isopeptide (Lys-Gly) (interchain with G-Cter in ubiquitin); alternate" evidence="1">
    <location>
        <position position="35"/>
    </location>
</feature>
<feature type="cross-link" description="Glycyl lysine isopeptide (Lys-Gly) (interchain with G-Cter in ubiquitin); alternate" evidence="4">
    <location>
        <position position="121"/>
    </location>
</feature>
<name>H2B2B_MOUSE</name>
<gene>
    <name evidence="19" type="primary">H2bc18</name>
    <name evidence="19" type="synonym">Hist2h2bb</name>
</gene>
<reference key="1">
    <citation type="journal article" date="1996" name="Genome Res.">
        <title>Characterization of the 55-kb mouse histone gene cluster on chromosome 3.</title>
        <authorList>
            <person name="Wang Z.-F."/>
            <person name="Tisovec R."/>
            <person name="Debry R.W."/>
            <person name="Frey M.R."/>
            <person name="Matera A.G."/>
            <person name="Marzluff W.F."/>
        </authorList>
    </citation>
    <scope>NUCLEOTIDE SEQUENCE [GENOMIC DNA]</scope>
</reference>
<reference key="2">
    <citation type="journal article" date="2002" name="Genomics">
        <title>The human and mouse replication-dependent histone genes.</title>
        <authorList>
            <person name="Marzluff W.F."/>
            <person name="Gongidi P."/>
            <person name="Woods K.R."/>
            <person name="Jin J."/>
            <person name="Maltais L.J."/>
        </authorList>
    </citation>
    <scope>NUCLEOTIDE SEQUENCE [GENOMIC DNA]</scope>
</reference>
<reference key="3">
    <citation type="journal article" date="2005" name="Science">
        <title>The transcriptional landscape of the mammalian genome.</title>
        <authorList>
            <person name="Carninci P."/>
            <person name="Kasukawa T."/>
            <person name="Katayama S."/>
            <person name="Gough J."/>
            <person name="Frith M.C."/>
            <person name="Maeda N."/>
            <person name="Oyama R."/>
            <person name="Ravasi T."/>
            <person name="Lenhard B."/>
            <person name="Wells C."/>
            <person name="Kodzius R."/>
            <person name="Shimokawa K."/>
            <person name="Bajic V.B."/>
            <person name="Brenner S.E."/>
            <person name="Batalov S."/>
            <person name="Forrest A.R."/>
            <person name="Zavolan M."/>
            <person name="Davis M.J."/>
            <person name="Wilming L.G."/>
            <person name="Aidinis V."/>
            <person name="Allen J.E."/>
            <person name="Ambesi-Impiombato A."/>
            <person name="Apweiler R."/>
            <person name="Aturaliya R.N."/>
            <person name="Bailey T.L."/>
            <person name="Bansal M."/>
            <person name="Baxter L."/>
            <person name="Beisel K.W."/>
            <person name="Bersano T."/>
            <person name="Bono H."/>
            <person name="Chalk A.M."/>
            <person name="Chiu K.P."/>
            <person name="Choudhary V."/>
            <person name="Christoffels A."/>
            <person name="Clutterbuck D.R."/>
            <person name="Crowe M.L."/>
            <person name="Dalla E."/>
            <person name="Dalrymple B.P."/>
            <person name="de Bono B."/>
            <person name="Della Gatta G."/>
            <person name="di Bernardo D."/>
            <person name="Down T."/>
            <person name="Engstrom P."/>
            <person name="Fagiolini M."/>
            <person name="Faulkner G."/>
            <person name="Fletcher C.F."/>
            <person name="Fukushima T."/>
            <person name="Furuno M."/>
            <person name="Futaki S."/>
            <person name="Gariboldi M."/>
            <person name="Georgii-Hemming P."/>
            <person name="Gingeras T.R."/>
            <person name="Gojobori T."/>
            <person name="Green R.E."/>
            <person name="Gustincich S."/>
            <person name="Harbers M."/>
            <person name="Hayashi Y."/>
            <person name="Hensch T.K."/>
            <person name="Hirokawa N."/>
            <person name="Hill D."/>
            <person name="Huminiecki L."/>
            <person name="Iacono M."/>
            <person name="Ikeo K."/>
            <person name="Iwama A."/>
            <person name="Ishikawa T."/>
            <person name="Jakt M."/>
            <person name="Kanapin A."/>
            <person name="Katoh M."/>
            <person name="Kawasawa Y."/>
            <person name="Kelso J."/>
            <person name="Kitamura H."/>
            <person name="Kitano H."/>
            <person name="Kollias G."/>
            <person name="Krishnan S.P."/>
            <person name="Kruger A."/>
            <person name="Kummerfeld S.K."/>
            <person name="Kurochkin I.V."/>
            <person name="Lareau L.F."/>
            <person name="Lazarevic D."/>
            <person name="Lipovich L."/>
            <person name="Liu J."/>
            <person name="Liuni S."/>
            <person name="McWilliam S."/>
            <person name="Madan Babu M."/>
            <person name="Madera M."/>
            <person name="Marchionni L."/>
            <person name="Matsuda H."/>
            <person name="Matsuzawa S."/>
            <person name="Miki H."/>
            <person name="Mignone F."/>
            <person name="Miyake S."/>
            <person name="Morris K."/>
            <person name="Mottagui-Tabar S."/>
            <person name="Mulder N."/>
            <person name="Nakano N."/>
            <person name="Nakauchi H."/>
            <person name="Ng P."/>
            <person name="Nilsson R."/>
            <person name="Nishiguchi S."/>
            <person name="Nishikawa S."/>
            <person name="Nori F."/>
            <person name="Ohara O."/>
            <person name="Okazaki Y."/>
            <person name="Orlando V."/>
            <person name="Pang K.C."/>
            <person name="Pavan W.J."/>
            <person name="Pavesi G."/>
            <person name="Pesole G."/>
            <person name="Petrovsky N."/>
            <person name="Piazza S."/>
            <person name="Reed J."/>
            <person name="Reid J.F."/>
            <person name="Ring B.Z."/>
            <person name="Ringwald M."/>
            <person name="Rost B."/>
            <person name="Ruan Y."/>
            <person name="Salzberg S.L."/>
            <person name="Sandelin A."/>
            <person name="Schneider C."/>
            <person name="Schoenbach C."/>
            <person name="Sekiguchi K."/>
            <person name="Semple C.A."/>
            <person name="Seno S."/>
            <person name="Sessa L."/>
            <person name="Sheng Y."/>
            <person name="Shibata Y."/>
            <person name="Shimada H."/>
            <person name="Shimada K."/>
            <person name="Silva D."/>
            <person name="Sinclair B."/>
            <person name="Sperling S."/>
            <person name="Stupka E."/>
            <person name="Sugiura K."/>
            <person name="Sultana R."/>
            <person name="Takenaka Y."/>
            <person name="Taki K."/>
            <person name="Tammoja K."/>
            <person name="Tan S.L."/>
            <person name="Tang S."/>
            <person name="Taylor M.S."/>
            <person name="Tegner J."/>
            <person name="Teichmann S.A."/>
            <person name="Ueda H.R."/>
            <person name="van Nimwegen E."/>
            <person name="Verardo R."/>
            <person name="Wei C.L."/>
            <person name="Yagi K."/>
            <person name="Yamanishi H."/>
            <person name="Zabarovsky E."/>
            <person name="Zhu S."/>
            <person name="Zimmer A."/>
            <person name="Hide W."/>
            <person name="Bult C."/>
            <person name="Grimmond S.M."/>
            <person name="Teasdale R.D."/>
            <person name="Liu E.T."/>
            <person name="Brusic V."/>
            <person name="Quackenbush J."/>
            <person name="Wahlestedt C."/>
            <person name="Mattick J.S."/>
            <person name="Hume D.A."/>
            <person name="Kai C."/>
            <person name="Sasaki D."/>
            <person name="Tomaru Y."/>
            <person name="Fukuda S."/>
            <person name="Kanamori-Katayama M."/>
            <person name="Suzuki M."/>
            <person name="Aoki J."/>
            <person name="Arakawa T."/>
            <person name="Iida J."/>
            <person name="Imamura K."/>
            <person name="Itoh M."/>
            <person name="Kato T."/>
            <person name="Kawaji H."/>
            <person name="Kawagashira N."/>
            <person name="Kawashima T."/>
            <person name="Kojima M."/>
            <person name="Kondo S."/>
            <person name="Konno H."/>
            <person name="Nakano K."/>
            <person name="Ninomiya N."/>
            <person name="Nishio T."/>
            <person name="Okada M."/>
            <person name="Plessy C."/>
            <person name="Shibata K."/>
            <person name="Shiraki T."/>
            <person name="Suzuki S."/>
            <person name="Tagami M."/>
            <person name="Waki K."/>
            <person name="Watahiki A."/>
            <person name="Okamura-Oho Y."/>
            <person name="Suzuki H."/>
            <person name="Kawai J."/>
            <person name="Hayashizaki Y."/>
        </authorList>
    </citation>
    <scope>NUCLEOTIDE SEQUENCE [LARGE SCALE MRNA]</scope>
    <source>
        <strain>C57BL/6J</strain>
        <tissue>Olfactory bulb</tissue>
    </source>
</reference>
<reference key="4">
    <citation type="journal article" date="2004" name="J. Exp. Med.">
        <title>Phosphorylation of histone H2B at DNA double-strand breaks.</title>
        <authorList>
            <person name="Fernandez-Capetillo O."/>
            <person name="Allis C.D."/>
            <person name="Nussenzweig A."/>
        </authorList>
    </citation>
    <scope>PHOSPHORYLATION AT SER-15</scope>
</reference>
<reference key="5">
    <citation type="journal article" date="2005" name="Immunity">
        <title>Histone modifications associated with somatic hypermutation.</title>
        <authorList>
            <person name="Odegard V.H."/>
            <person name="Kim S.T."/>
            <person name="Anderson S.M."/>
            <person name="Shlomchik M.J."/>
            <person name="Schatz D.G."/>
        </authorList>
    </citation>
    <scope>PHOSPHORYLATION AT SER-15</scope>
</reference>
<reference key="6">
    <citation type="journal article" date="2010" name="Science">
        <title>Signaling kinase AMPK activates stress-promoted transcription via histone H2B phosphorylation.</title>
        <authorList>
            <person name="Bungard D."/>
            <person name="Fuerth B.J."/>
            <person name="Zeng P.Y."/>
            <person name="Faubert B."/>
            <person name="Maas N.L."/>
            <person name="Viollet B."/>
            <person name="Carling D."/>
            <person name="Thompson C.B."/>
            <person name="Jones R.G."/>
            <person name="Berger S.L."/>
        </authorList>
    </citation>
    <scope>PHOSPHORYLATION AT SER-37</scope>
</reference>
<reference key="7">
    <citation type="journal article" date="2011" name="Cell">
        <title>Identification of 67 histone marks and histone lysine crotonylation as a new type of histone modification.</title>
        <authorList>
            <person name="Tan M."/>
            <person name="Luo H."/>
            <person name="Lee S."/>
            <person name="Jin F."/>
            <person name="Yang J.S."/>
            <person name="Montellier E."/>
            <person name="Buchou T."/>
            <person name="Cheng Z."/>
            <person name="Rousseaux S."/>
            <person name="Rajagopal N."/>
            <person name="Lu Z."/>
            <person name="Ye Z."/>
            <person name="Zhu Q."/>
            <person name="Wysocka J."/>
            <person name="Ye Y."/>
            <person name="Khochbin S."/>
            <person name="Ren B."/>
            <person name="Zhao Y."/>
        </authorList>
    </citation>
    <scope>CROTONYLATION AT LYS-6; LYS-12; LYS-13; LYS-16; LYS-17; LYS-21; LYS-24 AND LYS-35</scope>
</reference>
<reference key="8">
    <citation type="journal article" date="2012" name="Mol. Cell. Proteomics">
        <title>Lysine succinylation and lysine malonylation in histones.</title>
        <authorList>
            <person name="Xie Z."/>
            <person name="Dai J."/>
            <person name="Dai L."/>
            <person name="Tan M."/>
            <person name="Cheng Z."/>
            <person name="Wu Y."/>
            <person name="Boeke J.D."/>
            <person name="Zhao Y."/>
        </authorList>
    </citation>
    <scope>SUCCINYLATION AT LYS-121</scope>
</reference>
<reference key="9">
    <citation type="journal article" date="2013" name="Mol. Cell">
        <title>SIRT5-mediated lysine desuccinylation impacts diverse metabolic pathways.</title>
        <authorList>
            <person name="Park J."/>
            <person name="Chen Y."/>
            <person name="Tishkoff D.X."/>
            <person name="Peng C."/>
            <person name="Tan M."/>
            <person name="Dai L."/>
            <person name="Xie Z."/>
            <person name="Zhang Y."/>
            <person name="Zwaans B.M."/>
            <person name="Skinner M.E."/>
            <person name="Lombard D.B."/>
            <person name="Zhao Y."/>
        </authorList>
    </citation>
    <scope>ACETYLATION [LARGE SCALE ANALYSIS] AT PRO-2; LYS-6; LYS-12; LYS-17 AND LYS-21</scope>
    <scope>CLEAVAGE OF INITIATOR METHIONINE [LARGE SCALE ANALYSIS]</scope>
    <scope>IDENTIFICATION BY MASS SPECTROMETRY [LARGE SCALE ANALYSIS]</scope>
    <source>
        <tissue>Embryonic fibroblast</tissue>
    </source>
</reference>
<reference key="10">
    <citation type="journal article" date="2014" name="Nat. Chem. Biol.">
        <title>Lysine 2-hydroxyisobutyrylation is a widely distributed active histone mark.</title>
        <authorList>
            <person name="Dai L."/>
            <person name="Peng C."/>
            <person name="Montellier E."/>
            <person name="Lu Z."/>
            <person name="Chen Y."/>
            <person name="Ishii H."/>
            <person name="Debernardi A."/>
            <person name="Buchou T."/>
            <person name="Rousseaux S."/>
            <person name="Jin F."/>
            <person name="Sabari B.R."/>
            <person name="Deng Z."/>
            <person name="Allis C.D."/>
            <person name="Ren B."/>
            <person name="Khochbin S."/>
            <person name="Zhao Y."/>
        </authorList>
    </citation>
    <scope>HYDROXYBUTYRYLATION AT LYS-6; LYS-13; LYS-21; LYS-24; LYS-25; LYS-35; LYS-44; LYS-47; LYS-58; LYS-86; LYS-109; LYS-117 AND LYS-121</scope>
</reference>
<reference key="11">
    <citation type="journal article" date="2016" name="Mol. Cell">
        <title>Metabolic regulation of gene expression by histone lysine beta-hydroxybutyrylation.</title>
        <authorList>
            <person name="Xie Z."/>
            <person name="Zhang D."/>
            <person name="Chung D."/>
            <person name="Tang Z."/>
            <person name="Huang H."/>
            <person name="Dai L."/>
            <person name="Qi S."/>
            <person name="Li J."/>
            <person name="Colak G."/>
            <person name="Chen Y."/>
            <person name="Xia C."/>
            <person name="Peng C."/>
            <person name="Ruan H."/>
            <person name="Kirkey M."/>
            <person name="Wang D."/>
            <person name="Jensen L.M."/>
            <person name="Kwon O.K."/>
            <person name="Lee S."/>
            <person name="Pletcher S.D."/>
            <person name="Tan M."/>
            <person name="Lombard D.B."/>
            <person name="White K.P."/>
            <person name="Zhao H."/>
            <person name="Li J."/>
            <person name="Roeder R.G."/>
            <person name="Yang X."/>
            <person name="Zhao Y."/>
        </authorList>
    </citation>
    <scope>HYDROXYBUTYRYLATION AT LYS-6; LYS-12; LYS-21; LYS-35; LYS-109 AND LYS-117</scope>
</reference>
<reference key="12">
    <citation type="journal article" date="2019" name="Nature">
        <title>Metabolic regulation of gene expression by histone lactylation.</title>
        <authorList>
            <person name="Zhang D."/>
            <person name="Tang Z."/>
            <person name="Huang H."/>
            <person name="Zhou G."/>
            <person name="Cui C."/>
            <person name="Weng Y."/>
            <person name="Liu W."/>
            <person name="Kim S."/>
            <person name="Lee S."/>
            <person name="Perez-Neut M."/>
            <person name="Ding J."/>
            <person name="Czyz D."/>
            <person name="Hu R."/>
            <person name="Ye Z."/>
            <person name="He M."/>
            <person name="Zheng Y.G."/>
            <person name="Shuman H.A."/>
            <person name="Dai L."/>
            <person name="Ren B."/>
            <person name="Roeder R.G."/>
            <person name="Becker L."/>
            <person name="Zhao Y."/>
        </authorList>
    </citation>
    <scope>LACTYLATION AT LYS-6; LYS-12; LYS-16; LYS-17; LYS-21; LYS-86; LYS-109 AND LYS-117</scope>
</reference>
<reference key="13">
    <citation type="journal article" date="2020" name="Mol. Cell">
        <title>Functional interplay between histone H2B ADP-ribosylation and phosphorylation controls adipogenesis.</title>
        <authorList>
            <person name="Huang D."/>
            <person name="Camacho C.V."/>
            <person name="Setlem R."/>
            <person name="Ryu K.W."/>
            <person name="Parameswaran B."/>
            <person name="Gupta R.K."/>
            <person name="Kraus W.L."/>
        </authorList>
    </citation>
    <scope>ADP-RIBOSYLATION AT GLU-36</scope>
    <scope>PHOSPHORYLATION AT SER-37</scope>
</reference>
<dbReference type="EMBL" id="U62675">
    <property type="protein sequence ID" value="AAB04773.1"/>
    <property type="molecule type" value="Genomic_DNA"/>
</dbReference>
<dbReference type="EMBL" id="AK134918">
    <property type="status" value="NOT_ANNOTATED_CDS"/>
    <property type="molecule type" value="mRNA"/>
</dbReference>
<dbReference type="CCDS" id="CCDS57243.1"/>
<dbReference type="RefSeq" id="NP_783597.2">
    <property type="nucleotide sequence ID" value="NM_175666.3"/>
</dbReference>
<dbReference type="SMR" id="Q64525"/>
<dbReference type="BioGRID" id="235108">
    <property type="interactions" value="11"/>
</dbReference>
<dbReference type="FunCoup" id="Q64525">
    <property type="interactions" value="1764"/>
</dbReference>
<dbReference type="IntAct" id="Q64525">
    <property type="interactions" value="1"/>
</dbReference>
<dbReference type="STRING" id="10090.ENSMUSP00000135427"/>
<dbReference type="GlyGen" id="Q64525">
    <property type="glycosylation" value="2 sites, 1 O-linked glycan (1 site)"/>
</dbReference>
<dbReference type="iPTMnet" id="Q64525"/>
<dbReference type="PhosphoSitePlus" id="Q64525"/>
<dbReference type="SwissPalm" id="Q64525"/>
<dbReference type="jPOST" id="Q64525"/>
<dbReference type="PaxDb" id="10090-ENSMUSP00000135427"/>
<dbReference type="PeptideAtlas" id="Q64525"/>
<dbReference type="ProteomicsDB" id="270917"/>
<dbReference type="TopDownProteomics" id="Q64525"/>
<dbReference type="Antibodypedia" id="40729">
    <property type="antibodies" value="160 antibodies from 14 providers"/>
</dbReference>
<dbReference type="Ensembl" id="ENSMUST00000177113.2">
    <property type="protein sequence ID" value="ENSMUSP00000135427.2"/>
    <property type="gene ID" value="ENSMUSG00000105827.2"/>
</dbReference>
<dbReference type="GeneID" id="319189"/>
<dbReference type="KEGG" id="mmu:319189"/>
<dbReference type="UCSC" id="uc008qmp.1">
    <property type="organism name" value="mouse"/>
</dbReference>
<dbReference type="AGR" id="MGI:2448413"/>
<dbReference type="CTD" id="440689"/>
<dbReference type="MGI" id="MGI:2448413">
    <property type="gene designation" value="H2bc18"/>
</dbReference>
<dbReference type="VEuPathDB" id="HostDB:ENSMUSG00000105827"/>
<dbReference type="eggNOG" id="KOG1744">
    <property type="taxonomic scope" value="Eukaryota"/>
</dbReference>
<dbReference type="GeneTree" id="ENSGT01110000267152"/>
<dbReference type="HOGENOM" id="CLU_075666_2_1_1"/>
<dbReference type="InParanoid" id="Q64525"/>
<dbReference type="OMA" id="PLVCHIS"/>
<dbReference type="OrthoDB" id="9618206at2759"/>
<dbReference type="PhylomeDB" id="Q64525"/>
<dbReference type="TreeFam" id="TF300212"/>
<dbReference type="Reactome" id="R-MMU-3214815">
    <property type="pathway name" value="HDACs deacetylate histones"/>
</dbReference>
<dbReference type="Reactome" id="R-MMU-3214847">
    <property type="pathway name" value="HATs acetylate histones"/>
</dbReference>
<dbReference type="BioGRID-ORCS" id="319189">
    <property type="hits" value="16 hits in 79 CRISPR screens"/>
</dbReference>
<dbReference type="ChiTaRS" id="Hist2h2bb">
    <property type="organism name" value="mouse"/>
</dbReference>
<dbReference type="PRO" id="PR:Q64525"/>
<dbReference type="Proteomes" id="UP000000589">
    <property type="component" value="Chromosome 3"/>
</dbReference>
<dbReference type="RNAct" id="Q64525">
    <property type="molecule type" value="protein"/>
</dbReference>
<dbReference type="Bgee" id="ENSMUSG00000105827">
    <property type="expression patterns" value="Expressed in uterus and 58 other cell types or tissues"/>
</dbReference>
<dbReference type="GO" id="GO:0005829">
    <property type="term" value="C:cytosol"/>
    <property type="evidence" value="ECO:0007669"/>
    <property type="project" value="Ensembl"/>
</dbReference>
<dbReference type="GO" id="GO:0005654">
    <property type="term" value="C:nucleoplasm"/>
    <property type="evidence" value="ECO:0000304"/>
    <property type="project" value="Reactome"/>
</dbReference>
<dbReference type="GO" id="GO:0000786">
    <property type="term" value="C:nucleosome"/>
    <property type="evidence" value="ECO:0007669"/>
    <property type="project" value="UniProtKB-KW"/>
</dbReference>
<dbReference type="GO" id="GO:0003677">
    <property type="term" value="F:DNA binding"/>
    <property type="evidence" value="ECO:0007669"/>
    <property type="project" value="UniProtKB-KW"/>
</dbReference>
<dbReference type="GO" id="GO:0046982">
    <property type="term" value="F:protein heterodimerization activity"/>
    <property type="evidence" value="ECO:0007669"/>
    <property type="project" value="InterPro"/>
</dbReference>
<dbReference type="GO" id="GO:0030527">
    <property type="term" value="F:structural constituent of chromatin"/>
    <property type="evidence" value="ECO:0007669"/>
    <property type="project" value="InterPro"/>
</dbReference>
<dbReference type="CDD" id="cd22910">
    <property type="entry name" value="HFD_H2B"/>
    <property type="match status" value="1"/>
</dbReference>
<dbReference type="FunFam" id="1.10.20.10:FF:000003">
    <property type="entry name" value="Histone H2B"/>
    <property type="match status" value="1"/>
</dbReference>
<dbReference type="Gene3D" id="1.10.20.10">
    <property type="entry name" value="Histone, subunit A"/>
    <property type="match status" value="1"/>
</dbReference>
<dbReference type="InterPro" id="IPR009072">
    <property type="entry name" value="Histone-fold"/>
</dbReference>
<dbReference type="InterPro" id="IPR007125">
    <property type="entry name" value="Histone_H2A/H2B/H3"/>
</dbReference>
<dbReference type="InterPro" id="IPR000558">
    <property type="entry name" value="Histone_H2B"/>
</dbReference>
<dbReference type="InterPro" id="IPR055333">
    <property type="entry name" value="HISTONE_H2B_site"/>
</dbReference>
<dbReference type="PANTHER" id="PTHR23428">
    <property type="entry name" value="HISTONE H2B"/>
    <property type="match status" value="1"/>
</dbReference>
<dbReference type="Pfam" id="PF00125">
    <property type="entry name" value="Histone"/>
    <property type="match status" value="1"/>
</dbReference>
<dbReference type="PRINTS" id="PR00621">
    <property type="entry name" value="HISTONEH2B"/>
</dbReference>
<dbReference type="SMART" id="SM00427">
    <property type="entry name" value="H2B"/>
    <property type="match status" value="1"/>
</dbReference>
<dbReference type="SUPFAM" id="SSF47113">
    <property type="entry name" value="Histone-fold"/>
    <property type="match status" value="1"/>
</dbReference>
<dbReference type="PROSITE" id="PS00357">
    <property type="entry name" value="HISTONE_H2B"/>
    <property type="match status" value="1"/>
</dbReference>